<protein>
    <recommendedName>
        <fullName evidence="2">Amyloid-beta precursor protein</fullName>
    </recommendedName>
    <alternativeName>
        <fullName evidence="2">ABPP</fullName>
        <shortName evidence="2">APP</shortName>
    </alternativeName>
    <alternativeName>
        <fullName>Alzheimer disease amyloid A4 protein homolog</fullName>
    </alternativeName>
    <alternativeName>
        <fullName evidence="7">Amyloid precursor protein</fullName>
    </alternativeName>
    <alternativeName>
        <fullName evidence="3">Amyloid-beta (A4) precursor protein</fullName>
    </alternativeName>
    <alternativeName>
        <fullName>Amyloid-beta A4 protein</fullName>
    </alternativeName>
    <component>
        <recommendedName>
            <fullName evidence="6">Amyloid-beta protein 40</fullName>
            <shortName>Abeta40</shortName>
        </recommendedName>
        <alternativeName>
            <fullName evidence="2">Beta-APP40</fullName>
        </alternativeName>
    </component>
</protein>
<reference evidence="7" key="1">
    <citation type="journal article" date="2012" name="J. Mass Spectrom.">
        <title>An online nano-LC-ESI-FTICR-MS method for comprehensive characterization of endogenous fragments from amyloid beta and amyloid precursor protein in human and cat cerebrospinal fluid.</title>
        <authorList>
            <person name="Brinkmalm G."/>
            <person name="Portelius E."/>
            <person name="Ohrfelt A."/>
            <person name="Mattsson N."/>
            <person name="Persson R."/>
            <person name="Gustavsson M.K."/>
            <person name="Vite C.H."/>
            <person name="Gobom J."/>
            <person name="Mansson J.E."/>
            <person name="Nilsson J."/>
            <person name="Halim A."/>
            <person name="Larson G."/>
            <person name="Ruetschi U."/>
            <person name="Zetterberg H."/>
            <person name="Blennow K."/>
            <person name="Brinkmalm A."/>
        </authorList>
    </citation>
    <scope>PROTEIN SEQUENCE</scope>
    <scope>MASS SPECTROMETRY</scope>
    <source>
        <tissue evidence="5">Cerebrospinal fluid</tissue>
    </source>
</reference>
<gene>
    <name evidence="2" type="primary">APP</name>
</gene>
<accession>P86906</accession>
<evidence type="ECO:0000250" key="1"/>
<evidence type="ECO:0000250" key="2">
    <source>
        <dbReference type="UniProtKB" id="P05067"/>
    </source>
</evidence>
<evidence type="ECO:0000250" key="3">
    <source>
        <dbReference type="UniProtKB" id="P12023"/>
    </source>
</evidence>
<evidence type="ECO:0000255" key="4"/>
<evidence type="ECO:0000269" key="5">
    <source>
    </source>
</evidence>
<evidence type="ECO:0000303" key="6">
    <source>
    </source>
</evidence>
<evidence type="ECO:0000305" key="7"/>
<dbReference type="BMRB" id="P86906"/>
<dbReference type="FunCoup" id="P86906">
    <property type="interactions" value="50"/>
</dbReference>
<dbReference type="STRING" id="9685.ENSFCAP00000001445"/>
<dbReference type="PaxDb" id="9685-ENSFCAP00000001445"/>
<dbReference type="eggNOG" id="KOG3540">
    <property type="taxonomic scope" value="Eukaryota"/>
</dbReference>
<dbReference type="HOGENOM" id="CLU_014607_2_1_1"/>
<dbReference type="InParanoid" id="P86906"/>
<dbReference type="Proteomes" id="UP000011712">
    <property type="component" value="Unplaced"/>
</dbReference>
<dbReference type="GO" id="GO:0005905">
    <property type="term" value="C:clathrin-coated pit"/>
    <property type="evidence" value="ECO:0007669"/>
    <property type="project" value="UniProtKB-SubCell"/>
</dbReference>
<dbReference type="GO" id="GO:0005769">
    <property type="term" value="C:early endosome"/>
    <property type="evidence" value="ECO:0000250"/>
    <property type="project" value="UniProtKB"/>
</dbReference>
<dbReference type="GO" id="GO:0005798">
    <property type="term" value="C:Golgi-associated vesicle"/>
    <property type="evidence" value="ECO:0000250"/>
    <property type="project" value="UniProtKB"/>
</dbReference>
<dbReference type="GO" id="GO:0030426">
    <property type="term" value="C:growth cone"/>
    <property type="evidence" value="ECO:0007669"/>
    <property type="project" value="UniProtKB-SubCell"/>
</dbReference>
<dbReference type="GO" id="GO:0043204">
    <property type="term" value="C:perikaryon"/>
    <property type="evidence" value="ECO:0007669"/>
    <property type="project" value="UniProtKB-SubCell"/>
</dbReference>
<dbReference type="GO" id="GO:0005886">
    <property type="term" value="C:plasma membrane"/>
    <property type="evidence" value="ECO:0007669"/>
    <property type="project" value="UniProtKB-SubCell"/>
</dbReference>
<dbReference type="GO" id="GO:0055037">
    <property type="term" value="C:recycling endosome"/>
    <property type="evidence" value="ECO:0000250"/>
    <property type="project" value="UniProtKB"/>
</dbReference>
<dbReference type="GO" id="GO:0050890">
    <property type="term" value="P:cognition"/>
    <property type="evidence" value="ECO:0000250"/>
    <property type="project" value="UniProtKB"/>
</dbReference>
<dbReference type="FunFam" id="4.10.230.10:FF:000001">
    <property type="entry name" value="Amyloid beta A4 protein"/>
    <property type="match status" value="1"/>
</dbReference>
<dbReference type="Gene3D" id="4.10.230.10">
    <property type="entry name" value="Amyloidogenic glycoprotein, amyloid-beta peptide"/>
    <property type="match status" value="1"/>
</dbReference>
<dbReference type="InterPro" id="IPR013803">
    <property type="entry name" value="Amyloid_glyco_Abeta"/>
</dbReference>
<dbReference type="InterPro" id="IPR037071">
    <property type="entry name" value="Amyloid_glyco_Abeta_sf"/>
</dbReference>
<dbReference type="Pfam" id="PF03494">
    <property type="entry name" value="Beta-APP"/>
    <property type="match status" value="1"/>
</dbReference>
<dbReference type="PRINTS" id="PR00204">
    <property type="entry name" value="BETAAMYLOID"/>
</dbReference>
<proteinExistence type="evidence at protein level"/>
<name>A4_FELCA</name>
<feature type="chain" id="PRO_0000419960" description="Amyloid-beta precursor protein">
    <location>
        <begin position="1" status="less than"/>
        <end position="40" status="greater than"/>
    </location>
</feature>
<feature type="chain" id="PRO_0000419961" description="Amyloid-beta protein 40" evidence="5">
    <location>
        <begin position="1"/>
        <end position="40"/>
    </location>
</feature>
<feature type="site" description="Cleavage; by ACE" evidence="2">
    <location>
        <begin position="7"/>
        <end position="8"/>
    </location>
</feature>
<feature type="non-terminal residue" evidence="6">
    <location>
        <position position="1"/>
    </location>
</feature>
<feature type="non-terminal residue" evidence="6">
    <location>
        <position position="40"/>
    </location>
</feature>
<sequence length="40" mass="4344">DAEFRHESGYEVHHQKLVFFAEDVGSNKGAIIGLMVGGVV</sequence>
<keyword id="KW-0034">Amyloid</keyword>
<keyword id="KW-1003">Cell membrane</keyword>
<keyword id="KW-0966">Cell projection</keyword>
<keyword id="KW-0168">Coated pit</keyword>
<keyword id="KW-0968">Cytoplasmic vesicle</keyword>
<keyword id="KW-0903">Direct protein sequencing</keyword>
<keyword id="KW-0967">Endosome</keyword>
<keyword id="KW-0472">Membrane</keyword>
<keyword id="KW-1185">Reference proteome</keyword>
<comment type="function">
    <text evidence="1 2">Functions as a cell surface receptor and performs physiological functions on the surface of neurons relevant to neurite growth, neuronal adhesion and axonogenesis. Interaction between APP molecules on neighboring cells promotes synaptogenesis. Involved in cell mobility and transcription regulation through protein-protein interactions (By similarity). Can promote transcription activation through binding to APBB1-KAT5 and inhibit Notch signaling through interaction with Numb (By similarity). Couples to apoptosis-inducing pathways such as those mediated by G(o) and JIP (By similarity). Inhibits G(o)-alpha ATPase activity (By similarity). Acts as a kinesin I membrane receptor, mediating the axonal transport of beta-secretase and presenilin 1 (By similarity). May be involved in copper homeostasis/oxidative stress through copper ion reduction (By similarity). In vitro, copper-metallated APP induces neuronal death directly or is potentiated through Cu(2+)-mediated low-density lipoprotein oxidation (By similarity). Can regulate neurite outgrowth through binding to components of the extracellular matrix such as heparin and collagen I and IV. Induces a AGER-dependent pathway that involves activation of p38 MAPK, resulting in internalization of amyloid-beta peptide and mitochondrial dysfunction in cultured cortical neurons. Provides Cu(2+) ions for GPC1 which are required for release of nitric oxide (NO) and subsequent degradation of the heparan sulfate chains on GPC1 (By similarity).</text>
</comment>
<comment type="subunit">
    <text evidence="1 2 3">Binds, via its C-terminus, to the PID domain of several cytoplasmic proteins, including APBB family members, the APBA family, MAPK8IP1, SHC1 and NUMB and DAB1 (By similarity). Binding to DAB1 inhibits its serine phosphorylation (By similarity). Interacts (via NPXY motif) with DAB2 (via PID domain); the interaction is impaired by tyrosine phosphorylation of the NPXY motif. Also interacts with GPCR-like protein BPP, APPBP1, IB1, KNS2 (via its TPR domains), APPBP2 (via BaSS) and DDB1. In vitro, it binds MAPT via the MT-binding domains (By similarity). Associates with microtubules in the presence of ATP and in a kinesin-dependent manner (By similarity). Interacts, through a C-terminal domain, with GNAO1. Interacts with CPEB1, ANKS1B and AGER (By similarity). Interacts with ITM2B. Interacts with ITM2C. Interacts with IDE. Can form homodimers; dimerization is enhanced in the presence of Cu(2+) ions. Can form homodimers; this is promoted by heparin binding (By similarity). Interacts with SORL1 (via N-terminal ectodomain); this interaction retains APP in the trans-Golgi network and reduces processing into soluble APP-alpha and amyloid-beta peptides (By similarity). Interacts with PLD3 (By similarity). Interacts with VDAC1 (By similarity). Interacts with NSG1; could regulate APP processing (By similarity). Interacts with LRRK2 (By similarity). Interacts (via cytoplasmic domain) with KIF5B (By similarity). Interacts (via C-terminus) with APBB2/FE65L1 (via C-terminus) (By similarity). Interacts (via intracellular domain) with APBB3 (By similarity).</text>
</comment>
<comment type="subcellular location">
    <subcellularLocation>
        <location evidence="2">Cell membrane</location>
        <topology evidence="2">Single-pass type I membrane protein</topology>
    </subcellularLocation>
    <subcellularLocation>
        <location evidence="2">Membrane</location>
        <topology evidence="2">Single-pass type I membrane protein</topology>
    </subcellularLocation>
    <subcellularLocation>
        <location evidence="2">Perikaryon</location>
    </subcellularLocation>
    <subcellularLocation>
        <location evidence="2">Cell projection</location>
        <location evidence="2">Growth cone</location>
    </subcellularLocation>
    <subcellularLocation>
        <location evidence="2">Membrane</location>
        <location evidence="2">Clathrin-coated pit</location>
    </subcellularLocation>
    <subcellularLocation>
        <location evidence="2">Early endosome</location>
    </subcellularLocation>
    <subcellularLocation>
        <location evidence="2">Cytoplasmic vesicle</location>
    </subcellularLocation>
    <text evidence="2">Cell surface protein that rapidly becomes internalized via clathrin-coated pits. Only a minor proportion is present at the cell membrane; most of the protein is present in intracellular vesicles. During maturation, the immature APP (N-glycosylated in the endoplasmic reticulum) moves to the Golgi complex where complete maturation occurs (O-glycosylated and sulfated). After alpha-secretase cleavage, soluble APP is released into the extracellular space and the C-terminal is internalized to endosomes and lysosomes. Some APP accumulates in secretory transport vesicles leaving the late Golgi compartment and returns to the cell surface.</text>
</comment>
<comment type="PTM">
    <text evidence="2">Proteolytically processed under normal cellular conditions. Cleavage either by alpha-secretase, beta-secretase or theta-secretase leads to generation and extracellular release of soluble APP peptides, S-APP-alpha and S-APP-beta, and the retention of corresponding membrane-anchored C-terminal fragments, C80, C83 and C99. Subsequent processing of C80 and C83 by gamma-secretase yields P3 peptides. This is the major secretory pathway and is non-amyloidogenic. Alternatively, presenilin/nicastrin-mediated gamma-secretase processing of C99 releases the amyloid-beta proteins, amyloid-beta protein 40 and amyloid-beta protein 42, major components of amyloid plaques, and the cytotoxic C-terminal fragments, gamma-CTF(50), gamma-CTF(57) and gamma-CTF(59). PSEN1 cleavage is more efficient with C83 than with C99 as substrate (in vitro). Amyloid-beta protein 40 and Amyloid-beta protein 42 are cleaved by ACE. Many other minor amyloid-beta peptides, amyloid-beta 1-X peptides, are found in cerebral spinal fluid (CSF) including the amyloid-beta X-15 peptides, produced from the cleavage by alpha-secretase.</text>
</comment>
<comment type="mass spectrometry" mass="4341.336" error="0.2" method="MALDI" evidence="5">
    <molecule>Amyloid-beta protein 40</molecule>
</comment>
<comment type="mass spectrometry" mass="4341.1616" error="0.0025" method="Electrospray" evidence="5">
    <molecule>Amyloid-beta protein 40</molecule>
</comment>
<comment type="similarity">
    <text evidence="4">Belongs to the APP family.</text>
</comment>
<organism>
    <name type="scientific">Felis catus</name>
    <name type="common">Cat</name>
    <name type="synonym">Felis silvestris catus</name>
    <dbReference type="NCBI Taxonomy" id="9685"/>
    <lineage>
        <taxon>Eukaryota</taxon>
        <taxon>Metazoa</taxon>
        <taxon>Chordata</taxon>
        <taxon>Craniata</taxon>
        <taxon>Vertebrata</taxon>
        <taxon>Euteleostomi</taxon>
        <taxon>Mammalia</taxon>
        <taxon>Eutheria</taxon>
        <taxon>Laurasiatheria</taxon>
        <taxon>Carnivora</taxon>
        <taxon>Feliformia</taxon>
        <taxon>Felidae</taxon>
        <taxon>Felinae</taxon>
        <taxon>Felis</taxon>
    </lineage>
</organism>